<sequence length="472" mass="51739">MNGDVQSVIRGYLERAQVAKTMSDAGRWNEAGDLLRQLMTDVKSCKISASNRDEHDARNTFLRALEANLKLVQQNVRDEDDLHEAMTRQSGSPEPPADPDVWSKPSPPLPSSSKFGATKKGVGAAGPRPREISKSTSSMSTNPADVKPANPTQGILPQNSAGDSFDASAYDAYIVQAVRGTMATNTENTMSLDDIIGMHDVKQVLHEAVTLPLLVPEFFQGLRSPWKAMVLAGPPGTGKTLIARAIASESSSTFFTVSSTDLSSKWRGDSEKIVRLLFELARFYAPSIIFIDEIDTLGGQRGNSGEHEASRRVKSEFLVQMDGSQNKFDSRRVFVLAATNIPWELDEALRRRFEKRIFIPLPDIDARKKLIEKSMEGTPKSDEINYDDLAARTEGFSGADVVSLCRTAAINVLRRYDTKSLRGGELTAAMESLKAELVRNIDFEAALQAVSPSAGPDTMLKCKEWCDSFGAM</sequence>
<dbReference type="EC" id="5.6.1.1" evidence="1 12"/>
<dbReference type="EMBL" id="L25423">
    <property type="protein sequence ID" value="AAA28109.1"/>
    <property type="molecule type" value="Genomic_DNA"/>
</dbReference>
<dbReference type="EMBL" id="Z75713">
    <property type="protein sequence ID" value="CAB00052.1"/>
    <property type="molecule type" value="Genomic_DNA"/>
</dbReference>
<dbReference type="EMBL" id="Z75713">
    <property type="protein sequence ID" value="CAD56596.1"/>
    <property type="molecule type" value="Genomic_DNA"/>
</dbReference>
<dbReference type="PIR" id="S47861">
    <property type="entry name" value="S47861"/>
</dbReference>
<dbReference type="PIR" id="T24316">
    <property type="entry name" value="T24316"/>
</dbReference>
<dbReference type="RefSeq" id="NP_001370150.1">
    <molecule id="P34808-2"/>
    <property type="nucleotide sequence ID" value="NM_001383460.2"/>
</dbReference>
<dbReference type="RefSeq" id="NP_492257.1">
    <molecule id="P34808-1"/>
    <property type="nucleotide sequence ID" value="NM_059856.8"/>
</dbReference>
<dbReference type="RefSeq" id="NP_871793.1">
    <property type="nucleotide sequence ID" value="NM_181993.5"/>
</dbReference>
<dbReference type="PDB" id="5WC0">
    <property type="method" value="EM"/>
    <property type="resolution" value="4.40 A"/>
    <property type="chains" value="A/B/C/D/E/F=1-472"/>
</dbReference>
<dbReference type="PDB" id="5WC1">
    <property type="method" value="X-ray"/>
    <property type="resolution" value="3.30 A"/>
    <property type="chains" value="A=1-472"/>
</dbReference>
<dbReference type="PDB" id="5WCB">
    <property type="method" value="EM"/>
    <property type="resolution" value="6.00 A"/>
    <property type="chains" value="A/B/C/D/E/F=1-472"/>
</dbReference>
<dbReference type="PDB" id="6B5D">
    <property type="method" value="X-ray"/>
    <property type="resolution" value="3.10 A"/>
    <property type="chains" value="A=164-471"/>
</dbReference>
<dbReference type="PDB" id="6UGD">
    <property type="method" value="EM"/>
    <property type="resolution" value="3.50 A"/>
    <property type="chains" value="A/B/C/D/E/F=1-472"/>
</dbReference>
<dbReference type="PDB" id="6UGE">
    <property type="method" value="EM"/>
    <property type="resolution" value="3.60 A"/>
    <property type="chains" value="A/B/C/D/E/F=1-472"/>
</dbReference>
<dbReference type="PDB" id="6UGF">
    <property type="method" value="EM"/>
    <property type="resolution" value="4.20 A"/>
    <property type="chains" value="A/B/C/D/E/F=1-472"/>
</dbReference>
<dbReference type="PDBsum" id="5WC0"/>
<dbReference type="PDBsum" id="5WC1"/>
<dbReference type="PDBsum" id="5WCB"/>
<dbReference type="PDBsum" id="6B5D"/>
<dbReference type="PDBsum" id="6UGD"/>
<dbReference type="PDBsum" id="6UGE"/>
<dbReference type="PDBsum" id="6UGF"/>
<dbReference type="EMDB" id="EMD-20761"/>
<dbReference type="EMDB" id="EMD-20762"/>
<dbReference type="EMDB" id="EMD-20763"/>
<dbReference type="EMDB" id="EMD-8794"/>
<dbReference type="EMDB" id="EMD-8796"/>
<dbReference type="SMR" id="P34808"/>
<dbReference type="BioGRID" id="38046">
    <property type="interactions" value="15"/>
</dbReference>
<dbReference type="ComplexPortal" id="CPX-3889">
    <property type="entry name" value="Katanin complex"/>
</dbReference>
<dbReference type="DIP" id="DIP-25343N"/>
<dbReference type="FunCoup" id="P34808">
    <property type="interactions" value="1829"/>
</dbReference>
<dbReference type="IntAct" id="P34808">
    <property type="interactions" value="7"/>
</dbReference>
<dbReference type="MINT" id="P34808"/>
<dbReference type="STRING" id="6239.T01G9.5b.1"/>
<dbReference type="iPTMnet" id="P34808"/>
<dbReference type="PaxDb" id="6239-T01G9.5b"/>
<dbReference type="PeptideAtlas" id="P34808"/>
<dbReference type="EnsemblMetazoa" id="T01G9.5a.1">
    <molecule id="P34808-1"/>
    <property type="protein sequence ID" value="T01G9.5a.1"/>
    <property type="gene ID" value="WBGene00003183"/>
</dbReference>
<dbReference type="EnsemblMetazoa" id="T01G9.5b.1">
    <molecule id="P34808-2"/>
    <property type="protein sequence ID" value="T01G9.5b.1"/>
    <property type="gene ID" value="WBGene00003183"/>
</dbReference>
<dbReference type="GeneID" id="172612"/>
<dbReference type="KEGG" id="cel:CELE_T01G9.5"/>
<dbReference type="UCSC" id="T01G9.5a.1">
    <molecule id="P34808-1"/>
    <property type="organism name" value="c. elegans"/>
</dbReference>
<dbReference type="AGR" id="WB:WBGene00003183"/>
<dbReference type="CTD" id="249838"/>
<dbReference type="WormBase" id="T01G9.5a">
    <molecule id="P34808-1"/>
    <property type="protein sequence ID" value="CE06342"/>
    <property type="gene ID" value="WBGene00003183"/>
    <property type="gene designation" value="mei-1"/>
</dbReference>
<dbReference type="WormBase" id="T01G9.5b">
    <molecule id="P34808-2"/>
    <property type="protein sequence ID" value="CE32479"/>
    <property type="gene ID" value="WBGene00003183"/>
    <property type="gene designation" value="mei-1"/>
</dbReference>
<dbReference type="eggNOG" id="KOG0738">
    <property type="taxonomic scope" value="Eukaryota"/>
</dbReference>
<dbReference type="GeneTree" id="ENSGT00940000169739"/>
<dbReference type="HOGENOM" id="CLU_000688_21_1_1"/>
<dbReference type="InParanoid" id="P34808"/>
<dbReference type="OMA" id="KIESECY"/>
<dbReference type="OrthoDB" id="5334845at2759"/>
<dbReference type="PhylomeDB" id="P34808"/>
<dbReference type="BRENDA" id="5.6.1.1">
    <property type="organism ID" value="1045"/>
</dbReference>
<dbReference type="SignaLink" id="P34808"/>
<dbReference type="CD-CODE" id="1E117272">
    <property type="entry name" value="Centrosome"/>
</dbReference>
<dbReference type="PRO" id="PR:P34808"/>
<dbReference type="Proteomes" id="UP000001940">
    <property type="component" value="Chromosome I"/>
</dbReference>
<dbReference type="Bgee" id="WBGene00003183">
    <property type="expression patterns" value="Expressed in embryo and 4 other cell types or tissues"/>
</dbReference>
<dbReference type="GO" id="GO:0005813">
    <property type="term" value="C:centrosome"/>
    <property type="evidence" value="ECO:0007669"/>
    <property type="project" value="UniProtKB-UniRule"/>
</dbReference>
<dbReference type="GO" id="GO:0000785">
    <property type="term" value="C:chromatin"/>
    <property type="evidence" value="ECO:0000314"/>
    <property type="project" value="WormBase"/>
</dbReference>
<dbReference type="GO" id="GO:0005737">
    <property type="term" value="C:cytoplasm"/>
    <property type="evidence" value="ECO:0007669"/>
    <property type="project" value="UniProtKB-SubCell"/>
</dbReference>
<dbReference type="GO" id="GO:0008352">
    <property type="term" value="C:katanin complex"/>
    <property type="evidence" value="ECO:0000314"/>
    <property type="project" value="UniProtKB"/>
</dbReference>
<dbReference type="GO" id="GO:0072687">
    <property type="term" value="C:meiotic spindle"/>
    <property type="evidence" value="ECO:0000314"/>
    <property type="project" value="WormBase"/>
</dbReference>
<dbReference type="GO" id="GO:0090619">
    <property type="term" value="C:meiotic spindle pole"/>
    <property type="evidence" value="ECO:0000314"/>
    <property type="project" value="WormBase"/>
</dbReference>
<dbReference type="GO" id="GO:0005874">
    <property type="term" value="C:microtubule"/>
    <property type="evidence" value="ECO:0007669"/>
    <property type="project" value="UniProtKB-KW"/>
</dbReference>
<dbReference type="GO" id="GO:0005634">
    <property type="term" value="C:nucleus"/>
    <property type="evidence" value="ECO:0000314"/>
    <property type="project" value="WormBase"/>
</dbReference>
<dbReference type="GO" id="GO:0005819">
    <property type="term" value="C:spindle"/>
    <property type="evidence" value="ECO:0000314"/>
    <property type="project" value="WormBase"/>
</dbReference>
<dbReference type="GO" id="GO:0000922">
    <property type="term" value="C:spindle pole"/>
    <property type="evidence" value="ECO:0000314"/>
    <property type="project" value="ComplexPortal"/>
</dbReference>
<dbReference type="GO" id="GO:0005524">
    <property type="term" value="F:ATP binding"/>
    <property type="evidence" value="ECO:0000314"/>
    <property type="project" value="UniProtKB"/>
</dbReference>
<dbReference type="GO" id="GO:0016887">
    <property type="term" value="F:ATP hydrolysis activity"/>
    <property type="evidence" value="ECO:0000318"/>
    <property type="project" value="GO_Central"/>
</dbReference>
<dbReference type="GO" id="GO:0042802">
    <property type="term" value="F:identical protein binding"/>
    <property type="evidence" value="ECO:0000314"/>
    <property type="project" value="UniProtKB"/>
</dbReference>
<dbReference type="GO" id="GO:0090736">
    <property type="term" value="F:MATH domain binding"/>
    <property type="evidence" value="ECO:0000353"/>
    <property type="project" value="UniProtKB"/>
</dbReference>
<dbReference type="GO" id="GO:0008017">
    <property type="term" value="F:microtubule binding"/>
    <property type="evidence" value="ECO:0007669"/>
    <property type="project" value="UniProtKB-UniRule"/>
</dbReference>
<dbReference type="GO" id="GO:0008568">
    <property type="term" value="F:microtubule severing ATPase activity"/>
    <property type="evidence" value="ECO:0000314"/>
    <property type="project" value="WormBase"/>
</dbReference>
<dbReference type="GO" id="GO:0060090">
    <property type="term" value="F:molecular adaptor activity"/>
    <property type="evidence" value="ECO:0000314"/>
    <property type="project" value="DisProt"/>
</dbReference>
<dbReference type="GO" id="GO:0019903">
    <property type="term" value="F:protein phosphatase binding"/>
    <property type="evidence" value="ECO:0000353"/>
    <property type="project" value="UniProtKB"/>
</dbReference>
<dbReference type="GO" id="GO:0051301">
    <property type="term" value="P:cell division"/>
    <property type="evidence" value="ECO:0007669"/>
    <property type="project" value="UniProtKB-KW"/>
</dbReference>
<dbReference type="GO" id="GO:0009792">
    <property type="term" value="P:embryo development ending in birth or egg hatching"/>
    <property type="evidence" value="ECO:0000315"/>
    <property type="project" value="UniProtKB"/>
</dbReference>
<dbReference type="GO" id="GO:0007143">
    <property type="term" value="P:female meiotic nuclear division"/>
    <property type="evidence" value="ECO:0000315"/>
    <property type="project" value="WormBase"/>
</dbReference>
<dbReference type="GO" id="GO:0051229">
    <property type="term" value="P:meiotic spindle disassembly"/>
    <property type="evidence" value="ECO:0000315"/>
    <property type="project" value="WormBase"/>
</dbReference>
<dbReference type="GO" id="GO:0000212">
    <property type="term" value="P:meiotic spindle organization"/>
    <property type="evidence" value="ECO:0000315"/>
    <property type="project" value="WormBase"/>
</dbReference>
<dbReference type="GO" id="GO:0007019">
    <property type="term" value="P:microtubule depolymerization"/>
    <property type="evidence" value="ECO:0000314"/>
    <property type="project" value="WormBase"/>
</dbReference>
<dbReference type="GO" id="GO:0051013">
    <property type="term" value="P:microtubule severing"/>
    <property type="evidence" value="ECO:0000315"/>
    <property type="project" value="UniProtKB"/>
</dbReference>
<dbReference type="GO" id="GO:1902120">
    <property type="term" value="P:negative regulation of meiotic spindle elongation"/>
    <property type="evidence" value="ECO:0000315"/>
    <property type="project" value="WormBase"/>
</dbReference>
<dbReference type="GO" id="GO:0071688">
    <property type="term" value="P:striated muscle myosin thick filament assembly"/>
    <property type="evidence" value="ECO:0000315"/>
    <property type="project" value="UniProtKB"/>
</dbReference>
<dbReference type="CDD" id="cd19509">
    <property type="entry name" value="RecA-like_VPS4-like"/>
    <property type="match status" value="1"/>
</dbReference>
<dbReference type="DisProt" id="DP02999"/>
<dbReference type="FunFam" id="3.40.50.300:FF:002277">
    <property type="entry name" value="Meiotic spindle formation protein mei-1"/>
    <property type="match status" value="1"/>
</dbReference>
<dbReference type="Gene3D" id="1.10.8.60">
    <property type="match status" value="1"/>
</dbReference>
<dbReference type="Gene3D" id="3.40.50.300">
    <property type="entry name" value="P-loop containing nucleotide triphosphate hydrolases"/>
    <property type="match status" value="1"/>
</dbReference>
<dbReference type="HAMAP" id="MF_03023">
    <property type="entry name" value="Katanin_p60_A1"/>
    <property type="match status" value="1"/>
</dbReference>
<dbReference type="InterPro" id="IPR003593">
    <property type="entry name" value="AAA+_ATPase"/>
</dbReference>
<dbReference type="InterPro" id="IPR041569">
    <property type="entry name" value="AAA_lid_3"/>
</dbReference>
<dbReference type="InterPro" id="IPR003959">
    <property type="entry name" value="ATPase_AAA_core"/>
</dbReference>
<dbReference type="InterPro" id="IPR003960">
    <property type="entry name" value="ATPase_AAA_CS"/>
</dbReference>
<dbReference type="InterPro" id="IPR028596">
    <property type="entry name" value="KATNA1"/>
</dbReference>
<dbReference type="InterPro" id="IPR050304">
    <property type="entry name" value="MT-severing_AAA_ATPase"/>
</dbReference>
<dbReference type="InterPro" id="IPR027417">
    <property type="entry name" value="P-loop_NTPase"/>
</dbReference>
<dbReference type="PANTHER" id="PTHR23074">
    <property type="entry name" value="AAA DOMAIN-CONTAINING"/>
    <property type="match status" value="1"/>
</dbReference>
<dbReference type="PANTHER" id="PTHR23074:SF78">
    <property type="entry name" value="KATANIN P60 ATPASE-CONTAINING SUBUNIT A-LIKE 2"/>
    <property type="match status" value="1"/>
</dbReference>
<dbReference type="Pfam" id="PF00004">
    <property type="entry name" value="AAA"/>
    <property type="match status" value="1"/>
</dbReference>
<dbReference type="Pfam" id="PF17862">
    <property type="entry name" value="AAA_lid_3"/>
    <property type="match status" value="1"/>
</dbReference>
<dbReference type="SMART" id="SM00382">
    <property type="entry name" value="AAA"/>
    <property type="match status" value="1"/>
</dbReference>
<dbReference type="SUPFAM" id="SSF52540">
    <property type="entry name" value="P-loop containing nucleoside triphosphate hydrolases"/>
    <property type="match status" value="1"/>
</dbReference>
<dbReference type="PROSITE" id="PS00674">
    <property type="entry name" value="AAA"/>
    <property type="match status" value="1"/>
</dbReference>
<organism>
    <name type="scientific">Caenorhabditis elegans</name>
    <dbReference type="NCBI Taxonomy" id="6239"/>
    <lineage>
        <taxon>Eukaryota</taxon>
        <taxon>Metazoa</taxon>
        <taxon>Ecdysozoa</taxon>
        <taxon>Nematoda</taxon>
        <taxon>Chromadorea</taxon>
        <taxon>Rhabditida</taxon>
        <taxon>Rhabditina</taxon>
        <taxon>Rhabditomorpha</taxon>
        <taxon>Rhabditoidea</taxon>
        <taxon>Rhabditidae</taxon>
        <taxon>Peloderinae</taxon>
        <taxon>Caenorhabditis</taxon>
    </lineage>
</organism>
<keyword id="KW-0002">3D-structure</keyword>
<keyword id="KW-0025">Alternative splicing</keyword>
<keyword id="KW-0067">ATP-binding</keyword>
<keyword id="KW-0131">Cell cycle</keyword>
<keyword id="KW-0132">Cell division</keyword>
<keyword id="KW-0158">Chromosome</keyword>
<keyword id="KW-0963">Cytoplasm</keyword>
<keyword id="KW-0206">Cytoskeleton</keyword>
<keyword id="KW-0413">Isomerase</keyword>
<keyword id="KW-0469">Meiosis</keyword>
<keyword id="KW-0493">Microtubule</keyword>
<keyword id="KW-0547">Nucleotide-binding</keyword>
<keyword id="KW-0597">Phosphoprotein</keyword>
<keyword id="KW-1185">Reference proteome</keyword>
<keyword id="KW-0832">Ubl conjugation</keyword>
<name>KTNA1_CAEEL</name>
<reference key="1">
    <citation type="journal article" date="1994" name="Genetics">
        <title>mei-1, a gene required for meiotic spindle formation in Caenorhabditis elegans, is a member of a family of ATPases.</title>
        <authorList>
            <person name="Clark-Maguire S."/>
            <person name="Mains P.E."/>
        </authorList>
    </citation>
    <scope>NUCLEOTIDE SEQUENCE [GENOMIC DNA]</scope>
    <scope>ALTERNATIVE SPLICING (ISOFORMS A AND B)</scope>
    <scope>TISSUE SPECIFICITY</scope>
    <scope>MUTAGENESIS OF ARG-36; GLU-66; PRO-99; GLY-126; ARG-128; ILE-195; PRO-225; LEU-231; PRO-235; GLU-308; PRO-360; ARG-414 AND GLY-470</scope>
    <source>
        <strain>Bristol N2</strain>
    </source>
</reference>
<reference key="2">
    <citation type="journal article" date="1998" name="Science">
        <title>Genome sequence of the nematode C. elegans: a platform for investigating biology.</title>
        <authorList>
            <consortium name="The C. elegans sequencing consortium"/>
        </authorList>
    </citation>
    <scope>NUCLEOTIDE SEQUENCE [LARGE SCALE GENOMIC DNA]</scope>
    <source>
        <strain>Bristol N2</strain>
    </source>
</reference>
<reference key="3">
    <citation type="journal article" date="1994" name="J. Cell Biol.">
        <title>Localization of the mei-1 gene product of Caenorhaditis elegans, a meiotic-specific spindle component.</title>
        <authorList>
            <person name="Clark-Maguire S."/>
            <person name="Mains P.E."/>
        </authorList>
    </citation>
    <scope>FUNCTION</scope>
    <scope>DEVELOPMENTAL STAGE</scope>
    <scope>SUBCELLULAR LOCATION</scope>
</reference>
<reference key="4">
    <citation type="journal article" date="2000" name="Genes Dev.">
        <title>MEI-1/MEI-2 katanin-like microtubule severing activity is required for Caenorhabditis elegans meiosis.</title>
        <authorList>
            <person name="Srayko M."/>
            <person name="Buster D.W."/>
            <person name="Bazirgan O.A."/>
            <person name="McNally F.J."/>
            <person name="Mains P.E."/>
        </authorList>
    </citation>
    <scope>FUNCTION</scope>
    <scope>INTERACTION WITH MEI-2</scope>
    <scope>SUBCELLULAR LOCATION</scope>
</reference>
<reference key="5">
    <citation type="journal article" date="2002" name="Science">
        <title>Cytoskeletal regulation by the Nedd8 ubiquitin-like protein modification pathway.</title>
        <authorList>
            <person name="Kurz T."/>
            <person name="Pintard L."/>
            <person name="Willis J.H."/>
            <person name="Hamill D.R."/>
            <person name="Goenczy P."/>
            <person name="Peter M."/>
            <person name="Bowerman B."/>
        </authorList>
    </citation>
    <scope>REGULATION BY UBIQUITIN MEDIATED PROTEOLYSIS</scope>
</reference>
<reference key="6">
    <citation type="journal article" date="2003" name="Curr. Biol.">
        <title>Neddylation and deneddylation of CUL-3 is required to target MEI-1/katanin for degradation at the meiosis-to-mitosis transition in C. elegans.</title>
        <authorList>
            <person name="Pintard L."/>
            <person name="Kurz T."/>
            <person name="Glaser S."/>
            <person name="Willis J.H."/>
            <person name="Peter M."/>
            <person name="Bowerman B."/>
        </authorList>
    </citation>
    <scope>REGULATION BY UBIQUITIN MEDIATED PROTEOLYSIS</scope>
    <scope>SUBCELLULAR LOCATION</scope>
</reference>
<reference key="7">
    <citation type="journal article" date="2003" name="Dev. Biol.">
        <title>MEI-1/katanin is required for translocation of the meiosis I spindle to the oocyte cortex in C elegans.</title>
        <authorList>
            <person name="Yang H.-Y."/>
            <person name="McNally K."/>
            <person name="McNally F.J."/>
        </authorList>
    </citation>
    <scope>FUNCTION</scope>
</reference>
<reference key="8">
    <citation type="journal article" date="2003" name="Nature">
        <title>The BTB protein MEL-26 is a substrate-specific adaptor of the CUL-3 ubiquitin-ligase.</title>
        <authorList>
            <person name="Pintard L."/>
            <person name="Willis J.H."/>
            <person name="Willems A."/>
            <person name="Johnson J.-L.F."/>
            <person name="Srayko M."/>
            <person name="Kurz T."/>
            <person name="Glaser S."/>
            <person name="Mains P.E."/>
            <person name="Tyers M."/>
            <person name="Bowerman B."/>
            <person name="Peter M."/>
        </authorList>
    </citation>
    <scope>INTERACTION WITH MEL-26</scope>
    <scope>REGULATION BY UBIQUITIN MEDIATED PROTEOLYSIS</scope>
</reference>
<reference key="9">
    <citation type="journal article" date="2003" name="Nat. Cell Biol.">
        <title>Targeting of protein ubiquitination by BTB-Cullin 3-Roc1 ubiquitin ligases.</title>
        <authorList>
            <person name="Furukawa M."/>
            <person name="He Y.J."/>
            <person name="Borchers C."/>
            <person name="Xiong Y."/>
        </authorList>
    </citation>
    <scope>INTERACTION WITH MEL-26</scope>
    <scope>REGULATION BY UBIQUITIN MEDIATED PROTEOLYSIS</scope>
</reference>
<reference key="10">
    <citation type="journal article" date="2006" name="Curr. Biol.">
        <title>The C. elegans DYRK Kinase MBK-2 marks oocyte proteins for degradation in response to meiotic maturation.</title>
        <authorList>
            <person name="Stitzel M.L."/>
            <person name="Pellettieri J."/>
            <person name="Seydoux G."/>
        </authorList>
    </citation>
    <scope>SUBCELLULAR LOCATION</scope>
    <scope>DEVELOPMENTAL STAGE</scope>
    <scope>PHOSPHORYLATION AT SER-92</scope>
    <scope>MUTAGENESIS OF ARG-36 AND SER-92</scope>
</reference>
<reference key="11">
    <citation type="journal article" date="2009" name="Genetics">
        <title>The role of protein phosphatase 4 in regulating microtubule severing in the Caenorhabditis elegans embryo.</title>
        <authorList>
            <person name="Han X."/>
            <person name="Gomes J.E."/>
            <person name="Birmingham C.L."/>
            <person name="Pintard L."/>
            <person name="Sugimoto A."/>
            <person name="Mains P.E."/>
        </authorList>
    </citation>
    <scope>FUNCTION</scope>
    <scope>INTERACTION WITH PPH-4.1</scope>
    <scope>MUTAGENESIS OF PRO-99 AND GLU-308</scope>
</reference>
<reference key="12">
    <citation type="journal article" date="2012" name="Mol. Biol. Cell">
        <title>UNC-89 (obscurin) binds to MEL-26, a BTB-domain protein, and affects the function of MEI-1 (katanin) in striated muscle of Caenorhabditis elegans.</title>
        <authorList>
            <person name="Wilson K.J."/>
            <person name="Qadota H."/>
            <person name="Mains P.E."/>
            <person name="Benian G.M."/>
        </authorList>
    </citation>
    <scope>FUNCTION</scope>
    <scope>INTERACTION WITH MEL-26</scope>
    <scope>DISRUPTION PHENOTYPE</scope>
    <scope>MUTAGENESIS OF PRO-99 AND GLU-308</scope>
</reference>
<reference key="13">
    <citation type="journal article" date="2013" name="J. Cell Biol.">
        <title>Microtubule severing by the katanin complex is activated by PPFR-1-dependent MEI-1 dephosphorylation.</title>
        <authorList>
            <person name="Gomes J.E."/>
            <person name="Tavernier N."/>
            <person name="Richaudeau B."/>
            <person name="Formstecher E."/>
            <person name="Boulin T."/>
            <person name="Mains P.E."/>
            <person name="Dumont J."/>
            <person name="Pintard L."/>
        </authorList>
    </citation>
    <scope>FUNCTION</scope>
    <scope>INTERACTION WITH MEL-26</scope>
    <scope>PHOSPHORYLATION</scope>
    <scope>MUTAGENESIS OF PRO-235</scope>
</reference>
<reference key="14">
    <citation type="journal article" date="2017" name="Nat. Struct. Mol. Biol.">
        <title>Katanin spiral and ring structures shed light on power stroke for microtubule severing.</title>
        <authorList>
            <person name="Zehr E."/>
            <person name="Szyk A."/>
            <person name="Piszczek G."/>
            <person name="Szczesna E."/>
            <person name="Zuo X."/>
            <person name="Roll-Mecak A."/>
        </authorList>
    </citation>
    <scope>X-RAY CRYSTALLOGRAPHY (3.30 ANGSTROMS) IN COMPLEX WITH ATP</scope>
    <scope>FUNCTION</scope>
    <scope>CATALYTIC ACTIVITY</scope>
    <scope>SUBUNIT</scope>
    <scope>MUTAGENESIS OF ASP-322; ARG-351; ARG-352 AND PHE-469</scope>
</reference>
<protein>
    <recommendedName>
        <fullName evidence="1">Meiotic spindle formation protein mei-1</fullName>
        <ecNumber evidence="1 12">5.6.1.1</ecNumber>
    </recommendedName>
    <alternativeName>
        <fullName evidence="1">Katanin p60 ATPase-containing subunit A1</fullName>
        <shortName evidence="1">Katanin p60 subunit A1</shortName>
    </alternativeName>
    <alternativeName>
        <fullName evidence="1">p60 katanin</fullName>
    </alternativeName>
</protein>
<comment type="function">
    <text evidence="1 3 5 9 10 12 13">Catalytic subunit of a complex which severs microtubules in an ATP-dependent manner (PubMed:28783150). Microtubule severing may promote rapid reorganization of cellular microtubule arrays. Required specifically for meiotic spindle formation in the female germline; the presence of this protein is inimical to the formation of mitotic spindles (PubMed:10809666, PubMed:12885567, PubMed:19087961, PubMed:23918937, PubMed:8027178). In body wall muscles, regulates organization of myosin thick filaments (PubMed:22621901).</text>
</comment>
<comment type="catalytic activity">
    <reaction evidence="1 12">
        <text>n ATP + n H2O + a microtubule = n ADP + n phosphate + (n+1) alpha/beta tubulin heterodimers.</text>
        <dbReference type="EC" id="5.6.1.1"/>
    </reaction>
</comment>
<comment type="activity regulation">
    <text evidence="1">ATPase activity is stimulated by microtubules, which promote homooligomerization. ATP-dependent microtubule severing is stimulated by interaction with mei-2.</text>
</comment>
<comment type="subunit">
    <text evidence="1 3 6 7 9 10 11 12">Homohexamer; ATP hydrolysis initiates a cycle between an open spiral and a closed ring conformation which is probably involved in pulling tubulin dimers out from microtubules (PubMed:28783150). Interacts with mei-2, which may serve as a targeting subunit (PubMed:10809666). Interacts with mel-26, which targets mei-1 for ubiquitin mediated proteolysis (PubMed:13679921, PubMed:14528312, PubMed:23918937). Interacts with phosphatase pph-4.1 (PubMed:19087961).</text>
</comment>
<comment type="interaction">
    <interactant intactId="EBI-323248">
        <id>P34808</id>
    </interactant>
    <interactant intactId="EBI-312192">
        <id>Q9XTS1</id>
        <label>CELE_F47G4.4</label>
    </interactant>
    <organismsDiffer>false</organismsDiffer>
    <experiments>3</experiments>
</comment>
<comment type="interaction">
    <interactant intactId="EBI-323248">
        <id>P34808</id>
    </interactant>
    <interactant intactId="EBI-2417913">
        <id>Q9XTS3</id>
        <label>CELE_F47G4.5</label>
    </interactant>
    <organismsDiffer>false</organismsDiffer>
    <experiments>4</experiments>
</comment>
<comment type="interaction">
    <interactant intactId="EBI-323248">
        <id>P34808</id>
    </interactant>
    <interactant intactId="EBI-2565597">
        <id>Q9XTF3-2</id>
        <label>mbk-2</label>
    </interactant>
    <organismsDiffer>false</organismsDiffer>
    <experiments>2</experiments>
</comment>
<comment type="interaction">
    <interactant intactId="EBI-323248">
        <id>P34808</id>
    </interactant>
    <interactant intactId="EBI-323248">
        <id>P34808</id>
        <label>mei-1</label>
    </interactant>
    <organismsDiffer>false</organismsDiffer>
    <experiments>6</experiments>
</comment>
<comment type="interaction">
    <interactant intactId="EBI-323248">
        <id>P34808</id>
    </interactant>
    <interactant intactId="EBI-323243">
        <id>O44740</id>
        <label>mei-2</label>
    </interactant>
    <organismsDiffer>false</organismsDiffer>
    <experiments>3</experiments>
</comment>
<comment type="interaction">
    <interactant intactId="EBI-323248">
        <id>P34808</id>
    </interactant>
    <interactant intactId="EBI-320790">
        <id>Q94420</id>
        <label>mel-26</label>
    </interactant>
    <organismsDiffer>false</organismsDiffer>
    <experiments>6</experiments>
</comment>
<comment type="interaction">
    <interactant intactId="EBI-521381">
        <id>P34808-2</id>
    </interactant>
    <interactant intactId="EBI-320790">
        <id>Q94420</id>
        <label>mel-26</label>
    </interactant>
    <organismsDiffer>false</organismsDiffer>
    <experiments>3</experiments>
</comment>
<comment type="subcellular location">
    <subcellularLocation>
        <location evidence="1 3 4 13">Cytoplasm</location>
        <location evidence="1 3 4 13">Cytoskeleton</location>
        <location evidence="1 3 4 13">Spindle pole</location>
    </subcellularLocation>
    <subcellularLocation>
        <location evidence="4 8">Chromosome</location>
    </subcellularLocation>
    <subcellularLocation>
        <location evidence="8">Cytoplasm</location>
    </subcellularLocation>
    <text evidence="3 4 8 13">Localizes to the spindle poles and condensed chromatin during female meiosis (PubMed:10809666, PubMed:12781129, PubMed:16338136, PubMed:8027178). This localization requires mei-2 (PubMed:10809666). Also localizes to the polar body (PubMed:12781129). Ser-92 phosphorylated mei-1 is first detected on the maternal chromatin in anaphase of meiosis I, then localizes to the cytoplasm during meiosis II and quickly disappears between pronuclear formation and the first cell division, except in the polar bodies (PubMed:16338136).</text>
</comment>
<comment type="alternative products">
    <event type="alternative splicing"/>
    <isoform>
        <id>P34808-1</id>
        <name>a</name>
        <sequence type="displayed"/>
    </isoform>
    <isoform>
        <id>P34808-2</id>
        <name>b</name>
        <sequence type="described" ref="VSP_012951"/>
    </isoform>
</comment>
<comment type="developmental stage">
    <text evidence="13">Highly expressed in the female germline. Degradation at the meiosis-mitosis transition reduces cytoplasmic microtubule severing activity, thereby allowing the formation of larger mitotic spindles.</text>
</comment>
<comment type="PTM">
    <text evidence="8 11">Phosphorylated (PubMed:16338136, PubMed:23918937). Phosphorylation by mbk-2 is required for its rapid degradation following meiosis II (PubMed:16338136). Likely dephosphorylated by the PP4 complex composed of catalytic subunit pph-4.1 and regulatory subunit ppfr-1 (PubMed:23918937).</text>
</comment>
<comment type="PTM">
    <text>Polyubiquitination targets the protein for rapid degradation via the ubiquitin system at the end of meiosis. The BTB domain protein mel-26 may serve to specifically target mei-1 for ubiquitination by cul-3 containing complexes. The cul-3 protein is in turn regulated by neddylation by ned-8.</text>
</comment>
<comment type="disruption phenotype">
    <text evidence="10">RNAi-mediated knockdown at the L1 larval stage results in the disorganization of myosin thick filaments in adult body wall muscles characterized by the formation of abnormal myosin heavy chain myo-3 aggregates and V-shaped crossing of A-bands. In addition, body wall muscle cells appear shorter and broader.</text>
</comment>
<comment type="similarity">
    <text evidence="1">Belongs to the AAA ATPase family. Katanin p60 subunit A1 subfamily.</text>
</comment>
<gene>
    <name evidence="1" type="primary">mei-1</name>
    <name type="ORF">T01G9.5</name>
</gene>
<feature type="chain" id="PRO_0000084599" description="Meiotic spindle formation protein mei-1">
    <location>
        <begin position="1"/>
        <end position="472"/>
    </location>
</feature>
<feature type="region of interest" description="Disordered" evidence="2">
    <location>
        <begin position="83"/>
        <end position="161"/>
    </location>
</feature>
<feature type="compositionally biased region" description="Polar residues" evidence="2">
    <location>
        <begin position="134"/>
        <end position="143"/>
    </location>
</feature>
<feature type="compositionally biased region" description="Polar residues" evidence="2">
    <location>
        <begin position="150"/>
        <end position="161"/>
    </location>
</feature>
<feature type="binding site" evidence="1 12 16 17">
    <location>
        <begin position="233"/>
        <end position="240"/>
    </location>
    <ligand>
        <name>ATP</name>
        <dbReference type="ChEBI" id="CHEBI:30616"/>
    </ligand>
</feature>
<feature type="binding site" evidence="12 16 17">
    <location>
        <begin position="351"/>
        <end position="352"/>
    </location>
    <ligand>
        <name>ATP</name>
        <dbReference type="ChEBI" id="CHEBI:30616"/>
    </ligand>
</feature>
<feature type="modified residue" description="Phosphoserine; by mbk-2" evidence="8">
    <location>
        <position position="92"/>
    </location>
</feature>
<feature type="splice variant" id="VSP_012951" description="In isoform b." evidence="15">
    <original>Y</original>
    <variation>YFRY</variation>
    <location>
        <position position="416"/>
    </location>
</feature>
<feature type="mutagenesis site" description="In ct46ct99; loss of function. Does not affect mei-1 degradation. Prevents mei-1 degradation during the transition from meiosis to mitosis; when associated with A-92." evidence="8 14">
    <original>R</original>
    <variation>C</variation>
    <location>
        <position position="36"/>
    </location>
</feature>
<feature type="mutagenesis site" description="In ct46sb18; gain of function." evidence="14">
    <original>E</original>
    <variation>K</variation>
    <location>
        <position position="66"/>
    </location>
</feature>
<feature type="mutagenesis site" description="Abolishes phosphorylation by mbk-2. Abolishes interaction with mel-26. Prevents mei-1 degradation during the transition from meiosis to mitosis; when associated with C-36." evidence="8 11">
    <original>S</original>
    <variation>A</variation>
    <location>
        <position position="92"/>
    </location>
</feature>
<feature type="mutagenesis site" description="Phosphomimetic mutant. No effect on the interaction with mel-26." evidence="11">
    <original>S</original>
    <variation>D</variation>
    <location>
        <position position="92"/>
    </location>
</feature>
<feature type="mutagenesis site" description="In ct46; gain of function. Embryonic lethal. Abolishes interaction with mel-26 and probably mel-26-mediated degradation. Simultaneous RNAi-mediated knockdown of ppfr-1, pph-4.1 or ppfr-4, partially rescues embryonic lethality. Myosin thick filaments are disorganized in body wall muscles in an unc-29 (e1072) mutant background." evidence="9 10 14">
    <original>P</original>
    <variation>L</variation>
    <location>
        <position position="99"/>
    </location>
</feature>
<feature type="mutagenesis site" description="In ct46sb9 and ct46sb17; gain of function." evidence="14">
    <original>G</original>
    <variation>S</variation>
    <location>
        <position position="126"/>
    </location>
</feature>
<feature type="mutagenesis site" description="In ct46sb22; gain of function." evidence="14">
    <original>R</original>
    <variation>C</variation>
    <location>
        <position position="128"/>
    </location>
</feature>
<feature type="mutagenesis site" description="In ct46sb3; dominant negative." evidence="14">
    <original>I</original>
    <variation>K</variation>
    <location>
        <position position="195"/>
    </location>
</feature>
<feature type="mutagenesis site" description="In b284; dominant negative." evidence="14">
    <original>P</original>
    <variation>L</variation>
    <location>
        <position position="225"/>
    </location>
</feature>
<feature type="mutagenesis site" description="In ct81; dominant negative." evidence="14">
    <original>L</original>
    <variation>P</variation>
    <location>
        <position position="231"/>
    </location>
</feature>
<feature type="mutagenesis site" description="In ct93; dominant negative." evidence="14">
    <original>P</original>
    <variation>L</variation>
    <location>
        <position position="235"/>
    </location>
</feature>
<feature type="mutagenesis site" description="In ct46ct103; dominant negative. Formation of an abnormally large polar body during oocyte meiosis II. Increased in metaphase and anaphase meiotic spindle length, failure of chromosomes to align on the metaphase plate persistence of spindle poles during anaphase resulting in their mis-positioning and delay in anaphase meiotic spindle disassembly." evidence="11 14">
    <original>P</original>
    <variation>S</variation>
    <location>
        <position position="235"/>
    </location>
</feature>
<feature type="mutagenesis site" description="In ct46ct101; null. Formation of an abnormally large polar body during oocyte meiosis II. Myosin thick filaments are disorganized in body wall muscles in an unc-29 (e1072) mutant background." evidence="9 10 14">
    <original>E</original>
    <variation>D</variation>
    <location>
        <position position="308"/>
    </location>
</feature>
<feature type="mutagenesis site" description="Severe loss of ATPase activity and complete loss of microtubule severing activity." evidence="12">
    <original>D</original>
    <variation>R</variation>
    <location>
        <position position="322"/>
    </location>
</feature>
<feature type="mutagenesis site" description="Severe loss of ATPase activity and complete loss of microtubule severing activity." evidence="12">
    <original>R</original>
    <variation>A</variation>
    <location>
        <position position="351"/>
    </location>
</feature>
<feature type="mutagenesis site" description="Severe loss of ATPase activity and complete loss of microtubule severing activity." evidence="12">
    <original>R</original>
    <variation>A</variation>
    <location>
        <position position="352"/>
    </location>
</feature>
<feature type="mutagenesis site" description="In ct46sb23; gain of function." evidence="14">
    <original>P</original>
    <variation>S</variation>
    <location>
        <position position="360"/>
    </location>
</feature>
<feature type="mutagenesis site" description="In ct46ct89; dominant negative." evidence="14">
    <original>R</original>
    <variation>K</variation>
    <location>
        <position position="414"/>
    </location>
</feature>
<feature type="mutagenesis site" description="Severe loss of ATPase activity and complete loss of microtubule severing activity." evidence="12">
    <original>F</original>
    <variation>A</variation>
    <location>
        <position position="469"/>
    </location>
</feature>
<feature type="mutagenesis site" description="In ct46ct82; dominant negative." evidence="14">
    <original>G</original>
    <variation>D</variation>
    <location>
        <position position="470"/>
    </location>
</feature>
<feature type="helix" evidence="19">
    <location>
        <begin position="175"/>
        <end position="181"/>
    </location>
</feature>
<feature type="turn" evidence="19">
    <location>
        <begin position="185"/>
        <end position="187"/>
    </location>
</feature>
<feature type="helix" evidence="19">
    <location>
        <begin position="192"/>
        <end position="194"/>
    </location>
</feature>
<feature type="helix" evidence="19">
    <location>
        <begin position="199"/>
        <end position="208"/>
    </location>
</feature>
<feature type="helix" evidence="19">
    <location>
        <begin position="210"/>
        <end position="214"/>
    </location>
</feature>
<feature type="turn" evidence="19">
    <location>
        <begin position="216"/>
        <end position="218"/>
    </location>
</feature>
<feature type="helix" evidence="19">
    <location>
        <begin position="221"/>
        <end position="223"/>
    </location>
</feature>
<feature type="strand" evidence="19">
    <location>
        <begin position="227"/>
        <end position="232"/>
    </location>
</feature>
<feature type="helix" evidence="19">
    <location>
        <begin position="239"/>
        <end position="249"/>
    </location>
</feature>
<feature type="strand" evidence="20">
    <location>
        <begin position="250"/>
        <end position="252"/>
    </location>
</feature>
<feature type="strand" evidence="19">
    <location>
        <begin position="253"/>
        <end position="258"/>
    </location>
</feature>
<feature type="helix" evidence="19">
    <location>
        <begin position="259"/>
        <end position="264"/>
    </location>
</feature>
<feature type="helix" evidence="19">
    <location>
        <begin position="271"/>
        <end position="283"/>
    </location>
</feature>
<feature type="strand" evidence="19">
    <location>
        <begin position="284"/>
        <end position="292"/>
    </location>
</feature>
<feature type="helix" evidence="19">
    <location>
        <begin position="294"/>
        <end position="296"/>
    </location>
</feature>
<feature type="helix" evidence="19">
    <location>
        <begin position="311"/>
        <end position="314"/>
    </location>
</feature>
<feature type="helix" evidence="19">
    <location>
        <begin position="316"/>
        <end position="324"/>
    </location>
</feature>
<feature type="strand" evidence="19">
    <location>
        <begin position="333"/>
        <end position="340"/>
    </location>
</feature>
<feature type="helix" evidence="19">
    <location>
        <begin position="347"/>
        <end position="352"/>
    </location>
</feature>
<feature type="strand" evidence="19">
    <location>
        <begin position="355"/>
        <end position="358"/>
    </location>
</feature>
<feature type="helix" evidence="19">
    <location>
        <begin position="364"/>
        <end position="374"/>
    </location>
</feature>
<feature type="turn" evidence="19">
    <location>
        <begin position="375"/>
        <end position="377"/>
    </location>
</feature>
<feature type="helix" evidence="19">
    <location>
        <begin position="386"/>
        <end position="392"/>
    </location>
</feature>
<feature type="turn" evidence="18">
    <location>
        <begin position="393"/>
        <end position="395"/>
    </location>
</feature>
<feature type="helix" evidence="19">
    <location>
        <begin position="398"/>
        <end position="414"/>
    </location>
</feature>
<feature type="helix" evidence="19">
    <location>
        <begin position="419"/>
        <end position="421"/>
    </location>
</feature>
<feature type="strand" evidence="19">
    <location>
        <begin position="423"/>
        <end position="425"/>
    </location>
</feature>
<feature type="helix" evidence="19">
    <location>
        <begin position="428"/>
        <end position="435"/>
    </location>
</feature>
<feature type="helix" evidence="19">
    <location>
        <begin position="440"/>
        <end position="449"/>
    </location>
</feature>
<feature type="helix" evidence="19">
    <location>
        <begin position="456"/>
        <end position="465"/>
    </location>
</feature>
<evidence type="ECO:0000255" key="1">
    <source>
        <dbReference type="HAMAP-Rule" id="MF_03023"/>
    </source>
</evidence>
<evidence type="ECO:0000256" key="2">
    <source>
        <dbReference type="SAM" id="MobiDB-lite"/>
    </source>
</evidence>
<evidence type="ECO:0000269" key="3">
    <source>
    </source>
</evidence>
<evidence type="ECO:0000269" key="4">
    <source>
    </source>
</evidence>
<evidence type="ECO:0000269" key="5">
    <source>
    </source>
</evidence>
<evidence type="ECO:0000269" key="6">
    <source>
    </source>
</evidence>
<evidence type="ECO:0000269" key="7">
    <source>
    </source>
</evidence>
<evidence type="ECO:0000269" key="8">
    <source>
    </source>
</evidence>
<evidence type="ECO:0000269" key="9">
    <source>
    </source>
</evidence>
<evidence type="ECO:0000269" key="10">
    <source>
    </source>
</evidence>
<evidence type="ECO:0000269" key="11">
    <source>
    </source>
</evidence>
<evidence type="ECO:0000269" key="12">
    <source>
    </source>
</evidence>
<evidence type="ECO:0000269" key="13">
    <source>
    </source>
</evidence>
<evidence type="ECO:0000269" key="14">
    <source>
    </source>
</evidence>
<evidence type="ECO:0000305" key="15"/>
<evidence type="ECO:0007744" key="16">
    <source>
        <dbReference type="PDB" id="5WC0"/>
    </source>
</evidence>
<evidence type="ECO:0007744" key="17">
    <source>
        <dbReference type="PDB" id="5WCB"/>
    </source>
</evidence>
<evidence type="ECO:0007829" key="18">
    <source>
        <dbReference type="PDB" id="5WC1"/>
    </source>
</evidence>
<evidence type="ECO:0007829" key="19">
    <source>
        <dbReference type="PDB" id="6B5D"/>
    </source>
</evidence>
<evidence type="ECO:0007829" key="20">
    <source>
        <dbReference type="PDB" id="6UGD"/>
    </source>
</evidence>
<proteinExistence type="evidence at protein level"/>
<accession>P34808</accession>
<accession>Q8I4G6</accession>